<gene>
    <name evidence="1" type="primary">kdgT</name>
    <name type="ordered locus">Tola_3043</name>
</gene>
<dbReference type="EMBL" id="CP001616">
    <property type="protein sequence ID" value="ACQ94632.1"/>
    <property type="molecule type" value="Genomic_DNA"/>
</dbReference>
<dbReference type="RefSeq" id="WP_015880081.1">
    <property type="nucleotide sequence ID" value="NC_012691.1"/>
</dbReference>
<dbReference type="STRING" id="595494.Tola_3043"/>
<dbReference type="KEGG" id="tau:Tola_3043"/>
<dbReference type="eggNOG" id="ENOG502Z7JT">
    <property type="taxonomic scope" value="Bacteria"/>
</dbReference>
<dbReference type="HOGENOM" id="CLU_057476_0_1_6"/>
<dbReference type="OrthoDB" id="3185611at2"/>
<dbReference type="Proteomes" id="UP000009073">
    <property type="component" value="Chromosome"/>
</dbReference>
<dbReference type="GO" id="GO:0005886">
    <property type="term" value="C:plasma membrane"/>
    <property type="evidence" value="ECO:0007669"/>
    <property type="project" value="UniProtKB-SubCell"/>
</dbReference>
<dbReference type="GO" id="GO:0015649">
    <property type="term" value="F:2-keto-3-deoxygluconate:proton symporter activity"/>
    <property type="evidence" value="ECO:0007669"/>
    <property type="project" value="UniProtKB-UniRule"/>
</dbReference>
<dbReference type="HAMAP" id="MF_00070">
    <property type="entry name" value="KdgT"/>
    <property type="match status" value="1"/>
</dbReference>
<dbReference type="InterPro" id="IPR004684">
    <property type="entry name" value="2keto-3dGluconate_permease"/>
</dbReference>
<dbReference type="InterPro" id="IPR018395">
    <property type="entry name" value="2keto-3dGluconate_permease_sub"/>
</dbReference>
<dbReference type="NCBIfam" id="TIGR00793">
    <property type="entry name" value="kdgT"/>
    <property type="match status" value="1"/>
</dbReference>
<dbReference type="Pfam" id="PF03812">
    <property type="entry name" value="KdgT"/>
    <property type="match status" value="1"/>
</dbReference>
<feature type="chain" id="PRO_1000202443" description="2-keto-3-deoxygluconate permease">
    <location>
        <begin position="1"/>
        <end position="335"/>
    </location>
</feature>
<feature type="transmembrane region" description="Helical" evidence="1">
    <location>
        <begin position="10"/>
        <end position="30"/>
    </location>
</feature>
<feature type="transmembrane region" description="Helical" evidence="1">
    <location>
        <begin position="42"/>
        <end position="62"/>
    </location>
</feature>
<feature type="transmembrane region" description="Helical" evidence="1">
    <location>
        <begin position="77"/>
        <end position="97"/>
    </location>
</feature>
<feature type="transmembrane region" description="Helical" evidence="1">
    <location>
        <begin position="100"/>
        <end position="120"/>
    </location>
</feature>
<feature type="transmembrane region" description="Helical" evidence="1">
    <location>
        <begin position="141"/>
        <end position="161"/>
    </location>
</feature>
<feature type="transmembrane region" description="Helical" evidence="1">
    <location>
        <begin position="163"/>
        <end position="183"/>
    </location>
</feature>
<feature type="transmembrane region" description="Helical" evidence="1">
    <location>
        <begin position="200"/>
        <end position="220"/>
    </location>
</feature>
<feature type="transmembrane region" description="Helical" evidence="1">
    <location>
        <begin position="224"/>
        <end position="244"/>
    </location>
</feature>
<feature type="transmembrane region" description="Helical" evidence="1">
    <location>
        <begin position="254"/>
        <end position="274"/>
    </location>
</feature>
<feature type="transmembrane region" description="Helical" evidence="1">
    <location>
        <begin position="289"/>
        <end position="309"/>
    </location>
</feature>
<proteinExistence type="inferred from homology"/>
<reference key="1">
    <citation type="submission" date="2009-05" db="EMBL/GenBank/DDBJ databases">
        <title>Complete sequence of Tolumonas auensis DSM 9187.</title>
        <authorList>
            <consortium name="US DOE Joint Genome Institute"/>
            <person name="Lucas S."/>
            <person name="Copeland A."/>
            <person name="Lapidus A."/>
            <person name="Glavina del Rio T."/>
            <person name="Tice H."/>
            <person name="Bruce D."/>
            <person name="Goodwin L."/>
            <person name="Pitluck S."/>
            <person name="Chertkov O."/>
            <person name="Brettin T."/>
            <person name="Detter J.C."/>
            <person name="Han C."/>
            <person name="Larimer F."/>
            <person name="Land M."/>
            <person name="Hauser L."/>
            <person name="Kyrpides N."/>
            <person name="Mikhailova N."/>
            <person name="Spring S."/>
            <person name="Beller H."/>
        </authorList>
    </citation>
    <scope>NUCLEOTIDE SEQUENCE [LARGE SCALE GENOMIC DNA]</scope>
    <source>
        <strain>DSM 9187 / NBRC 110442 / TA 4</strain>
    </source>
</reference>
<sequence length="335" mass="34460">MKIKATIDRIPGGLMLVPLLLGAILHTAAPGTAEYFGSFTKGIITGTLPILSVWFFCIGASIDLRATGTVLRKSGTLVLTKIAVAWVVALIAAQLLPEYGIEVGMLAGLSTLALVSAMDMTNGGLYASLMNQYGSKEESGAFVLMSVESGPLMTMVILGSAGLASFQPHHFVGAVLPFLIGFALGNLDHDLREFFSRATQTLIPFFGFALGNTINLGVILDTGLLGIAMGLLVIVVTGIPLIIADRLIGGGNGTAGLAASSTAGAAVANPVIIAQMNPAFAKIAPAATALVATCVIVTSILVPILTAMYAKRMGNPMPAQHGASAGKEKMAPEMH</sequence>
<keyword id="KW-0997">Cell inner membrane</keyword>
<keyword id="KW-1003">Cell membrane</keyword>
<keyword id="KW-0472">Membrane</keyword>
<keyword id="KW-1185">Reference proteome</keyword>
<keyword id="KW-0762">Sugar transport</keyword>
<keyword id="KW-0769">Symport</keyword>
<keyword id="KW-0812">Transmembrane</keyword>
<keyword id="KW-1133">Transmembrane helix</keyword>
<keyword id="KW-0813">Transport</keyword>
<organism>
    <name type="scientific">Tolumonas auensis (strain DSM 9187 / NBRC 110442 / TA 4)</name>
    <dbReference type="NCBI Taxonomy" id="595494"/>
    <lineage>
        <taxon>Bacteria</taxon>
        <taxon>Pseudomonadati</taxon>
        <taxon>Pseudomonadota</taxon>
        <taxon>Gammaproteobacteria</taxon>
        <taxon>Aeromonadales</taxon>
        <taxon>Aeromonadaceae</taxon>
        <taxon>Tolumonas</taxon>
    </lineage>
</organism>
<evidence type="ECO:0000255" key="1">
    <source>
        <dbReference type="HAMAP-Rule" id="MF_00070"/>
    </source>
</evidence>
<name>KDGT_TOLAT</name>
<protein>
    <recommendedName>
        <fullName evidence="1">2-keto-3-deoxygluconate permease</fullName>
        <shortName evidence="1">KDG permease</shortName>
    </recommendedName>
</protein>
<comment type="function">
    <text evidence="1">Catalyzes the proton-dependent uptake of 2-keto-3-deoxygluconate (KDG) into the cell.</text>
</comment>
<comment type="catalytic activity">
    <reaction evidence="1">
        <text>2-dehydro-3-deoxy-D-gluconate(in) + H(+)(in) = 2-dehydro-3-deoxy-D-gluconate(out) + H(+)(out)</text>
        <dbReference type="Rhea" id="RHEA:29943"/>
        <dbReference type="ChEBI" id="CHEBI:15378"/>
        <dbReference type="ChEBI" id="CHEBI:57990"/>
    </reaction>
    <physiologicalReaction direction="right-to-left" evidence="1">
        <dbReference type="Rhea" id="RHEA:29945"/>
    </physiologicalReaction>
</comment>
<comment type="subcellular location">
    <subcellularLocation>
        <location evidence="1">Cell inner membrane</location>
        <topology evidence="1">Multi-pass membrane protein</topology>
    </subcellularLocation>
</comment>
<comment type="similarity">
    <text evidence="1">Belongs to the KdgT transporter family.</text>
</comment>
<accession>C4LDM1</accession>